<sequence>MADIDPNQLELERQGILLTTVNRFYNWGRRSSIWPMAFGLACCAIEMMAFGLSRYDVARFGAELFRASPRQADLMIVAGTVTKKMAPQVVRLYNQMAEPRYVISMGACATSGGPFRDGYNVLRGIDLLIPVDVYVPGCPPRPEALLHALMTLQEQIDRQKLGRVRWYGEGDKPQTTDFPVPTFGAKGLEIDGKLIDPVGGLPLLSPYTSPSHGEHRSGQIEHPEVVRQFPIMDPEVELEHALKARGVSPEIAADDLKRGEVSNA</sequence>
<comment type="function">
    <text evidence="1">NDH-1 shuttles electrons from NADH, via FMN and iron-sulfur (Fe-S) centers, to quinones in the respiratory chain. The immediate electron acceptor for the enzyme in this species is believed to be ubiquinone. Couples the redox reaction to proton translocation (for every two electrons transferred, four hydrogen ions are translocated across the cytoplasmic membrane), and thus conserves the redox energy in a proton gradient.</text>
</comment>
<comment type="catalytic activity">
    <reaction evidence="1">
        <text>a quinone + NADH + 5 H(+)(in) = a quinol + NAD(+) + 4 H(+)(out)</text>
        <dbReference type="Rhea" id="RHEA:57888"/>
        <dbReference type="ChEBI" id="CHEBI:15378"/>
        <dbReference type="ChEBI" id="CHEBI:24646"/>
        <dbReference type="ChEBI" id="CHEBI:57540"/>
        <dbReference type="ChEBI" id="CHEBI:57945"/>
        <dbReference type="ChEBI" id="CHEBI:132124"/>
    </reaction>
</comment>
<comment type="cofactor">
    <cofactor evidence="1">
        <name>[4Fe-4S] cluster</name>
        <dbReference type="ChEBI" id="CHEBI:49883"/>
    </cofactor>
    <text evidence="1">Binds 1 [4Fe-4S] cluster.</text>
</comment>
<comment type="subunit">
    <text evidence="1">NDH-1 is composed of 14 different subunits. Subunits NuoB, C, D, E, F, and G constitute the peripheral sector of the complex.</text>
</comment>
<comment type="subcellular location">
    <subcellularLocation>
        <location evidence="1">Cell membrane</location>
        <topology evidence="1">Peripheral membrane protein</topology>
        <orientation evidence="1">Cytoplasmic side</orientation>
    </subcellularLocation>
</comment>
<comment type="similarity">
    <text evidence="1">Belongs to the complex I 20 kDa subunit family.</text>
</comment>
<dbReference type="EC" id="7.1.1.-" evidence="1"/>
<dbReference type="EMBL" id="CP001337">
    <property type="protein sequence ID" value="ACL24531.1"/>
    <property type="molecule type" value="Genomic_DNA"/>
</dbReference>
<dbReference type="RefSeq" id="WP_015940390.1">
    <property type="nucleotide sequence ID" value="NC_011831.1"/>
</dbReference>
<dbReference type="SMR" id="B8GA16"/>
<dbReference type="STRING" id="326427.Cagg_1630"/>
<dbReference type="KEGG" id="cag:Cagg_1630"/>
<dbReference type="eggNOG" id="COG0377">
    <property type="taxonomic scope" value="Bacteria"/>
</dbReference>
<dbReference type="HOGENOM" id="CLU_055737_3_0_0"/>
<dbReference type="OrthoDB" id="9786737at2"/>
<dbReference type="Proteomes" id="UP000002508">
    <property type="component" value="Chromosome"/>
</dbReference>
<dbReference type="GO" id="GO:0005886">
    <property type="term" value="C:plasma membrane"/>
    <property type="evidence" value="ECO:0007669"/>
    <property type="project" value="UniProtKB-SubCell"/>
</dbReference>
<dbReference type="GO" id="GO:0045271">
    <property type="term" value="C:respiratory chain complex I"/>
    <property type="evidence" value="ECO:0007669"/>
    <property type="project" value="TreeGrafter"/>
</dbReference>
<dbReference type="GO" id="GO:0051539">
    <property type="term" value="F:4 iron, 4 sulfur cluster binding"/>
    <property type="evidence" value="ECO:0007669"/>
    <property type="project" value="UniProtKB-KW"/>
</dbReference>
<dbReference type="GO" id="GO:0005506">
    <property type="term" value="F:iron ion binding"/>
    <property type="evidence" value="ECO:0007669"/>
    <property type="project" value="UniProtKB-UniRule"/>
</dbReference>
<dbReference type="GO" id="GO:0008137">
    <property type="term" value="F:NADH dehydrogenase (ubiquinone) activity"/>
    <property type="evidence" value="ECO:0007669"/>
    <property type="project" value="InterPro"/>
</dbReference>
<dbReference type="GO" id="GO:0050136">
    <property type="term" value="F:NADH:ubiquinone reductase (non-electrogenic) activity"/>
    <property type="evidence" value="ECO:0007669"/>
    <property type="project" value="UniProtKB-UniRule"/>
</dbReference>
<dbReference type="GO" id="GO:0048038">
    <property type="term" value="F:quinone binding"/>
    <property type="evidence" value="ECO:0007669"/>
    <property type="project" value="UniProtKB-KW"/>
</dbReference>
<dbReference type="GO" id="GO:0009060">
    <property type="term" value="P:aerobic respiration"/>
    <property type="evidence" value="ECO:0007669"/>
    <property type="project" value="TreeGrafter"/>
</dbReference>
<dbReference type="GO" id="GO:0015990">
    <property type="term" value="P:electron transport coupled proton transport"/>
    <property type="evidence" value="ECO:0007669"/>
    <property type="project" value="TreeGrafter"/>
</dbReference>
<dbReference type="FunFam" id="3.40.50.12280:FF:000004">
    <property type="entry name" value="NADH-quinone oxidoreductase subunit B"/>
    <property type="match status" value="1"/>
</dbReference>
<dbReference type="Gene3D" id="3.40.50.12280">
    <property type="match status" value="1"/>
</dbReference>
<dbReference type="HAMAP" id="MF_01356">
    <property type="entry name" value="NDH1_NuoB"/>
    <property type="match status" value="1"/>
</dbReference>
<dbReference type="InterPro" id="IPR006137">
    <property type="entry name" value="NADH_UbQ_OxRdtase-like_20kDa"/>
</dbReference>
<dbReference type="InterPro" id="IPR006138">
    <property type="entry name" value="NADH_UQ_OxRdtase_20Kd_su"/>
</dbReference>
<dbReference type="NCBIfam" id="TIGR01957">
    <property type="entry name" value="nuoB_fam"/>
    <property type="match status" value="1"/>
</dbReference>
<dbReference type="NCBIfam" id="NF005012">
    <property type="entry name" value="PRK06411.1"/>
    <property type="match status" value="1"/>
</dbReference>
<dbReference type="NCBIfam" id="NF011394">
    <property type="entry name" value="PRK14819.1"/>
    <property type="match status" value="1"/>
</dbReference>
<dbReference type="PANTHER" id="PTHR11995">
    <property type="entry name" value="NADH DEHYDROGENASE"/>
    <property type="match status" value="1"/>
</dbReference>
<dbReference type="PANTHER" id="PTHR11995:SF33">
    <property type="entry name" value="NADH-QUINONE OXIDOREDUCTASE SUBUNIT B 2"/>
    <property type="match status" value="1"/>
</dbReference>
<dbReference type="Pfam" id="PF01058">
    <property type="entry name" value="Oxidored_q6"/>
    <property type="match status" value="1"/>
</dbReference>
<dbReference type="SUPFAM" id="SSF56770">
    <property type="entry name" value="HydA/Nqo6-like"/>
    <property type="match status" value="1"/>
</dbReference>
<proteinExistence type="inferred from homology"/>
<evidence type="ECO:0000255" key="1">
    <source>
        <dbReference type="HAMAP-Rule" id="MF_01356"/>
    </source>
</evidence>
<name>NUOB2_CHLAD</name>
<keyword id="KW-0004">4Fe-4S</keyword>
<keyword id="KW-1003">Cell membrane</keyword>
<keyword id="KW-0408">Iron</keyword>
<keyword id="KW-0411">Iron-sulfur</keyword>
<keyword id="KW-0472">Membrane</keyword>
<keyword id="KW-0479">Metal-binding</keyword>
<keyword id="KW-0520">NAD</keyword>
<keyword id="KW-0874">Quinone</keyword>
<keyword id="KW-1278">Translocase</keyword>
<keyword id="KW-0813">Transport</keyword>
<keyword id="KW-0830">Ubiquinone</keyword>
<reference key="1">
    <citation type="submission" date="2008-12" db="EMBL/GenBank/DDBJ databases">
        <title>Complete sequence of Chloroflexus aggregans DSM 9485.</title>
        <authorList>
            <consortium name="US DOE Joint Genome Institute"/>
            <person name="Lucas S."/>
            <person name="Copeland A."/>
            <person name="Lapidus A."/>
            <person name="Glavina del Rio T."/>
            <person name="Dalin E."/>
            <person name="Tice H."/>
            <person name="Pitluck S."/>
            <person name="Foster B."/>
            <person name="Larimer F."/>
            <person name="Land M."/>
            <person name="Hauser L."/>
            <person name="Kyrpides N."/>
            <person name="Mikhailova N."/>
            <person name="Bryant D.A."/>
            <person name="Richardson P."/>
        </authorList>
    </citation>
    <scope>NUCLEOTIDE SEQUENCE [LARGE SCALE GENOMIC DNA]</scope>
    <source>
        <strain>MD-66 / DSM 9485</strain>
    </source>
</reference>
<organism>
    <name type="scientific">Chloroflexus aggregans (strain MD-66 / DSM 9485)</name>
    <dbReference type="NCBI Taxonomy" id="326427"/>
    <lineage>
        <taxon>Bacteria</taxon>
        <taxon>Bacillati</taxon>
        <taxon>Chloroflexota</taxon>
        <taxon>Chloroflexia</taxon>
        <taxon>Chloroflexales</taxon>
        <taxon>Chloroflexineae</taxon>
        <taxon>Chloroflexaceae</taxon>
        <taxon>Chloroflexus</taxon>
    </lineage>
</organism>
<gene>
    <name evidence="1" type="primary">nuoB2</name>
    <name type="ordered locus">Cagg_1630</name>
</gene>
<feature type="chain" id="PRO_0000376174" description="NADH-quinone oxidoreductase subunit B 2">
    <location>
        <begin position="1"/>
        <end position="264"/>
    </location>
</feature>
<feature type="binding site" evidence="1">
    <location>
        <position position="42"/>
    </location>
    <ligand>
        <name>[4Fe-4S] cluster</name>
        <dbReference type="ChEBI" id="CHEBI:49883"/>
    </ligand>
</feature>
<feature type="binding site" evidence="1">
    <location>
        <position position="43"/>
    </location>
    <ligand>
        <name>[4Fe-4S] cluster</name>
        <dbReference type="ChEBI" id="CHEBI:49883"/>
    </ligand>
</feature>
<feature type="binding site" evidence="1">
    <location>
        <position position="108"/>
    </location>
    <ligand>
        <name>[4Fe-4S] cluster</name>
        <dbReference type="ChEBI" id="CHEBI:49883"/>
    </ligand>
</feature>
<feature type="binding site" evidence="1">
    <location>
        <position position="138"/>
    </location>
    <ligand>
        <name>[4Fe-4S] cluster</name>
        <dbReference type="ChEBI" id="CHEBI:49883"/>
    </ligand>
</feature>
<protein>
    <recommendedName>
        <fullName evidence="1">NADH-quinone oxidoreductase subunit B 2</fullName>
        <ecNumber evidence="1">7.1.1.-</ecNumber>
    </recommendedName>
    <alternativeName>
        <fullName evidence="1">NADH dehydrogenase I subunit B 2</fullName>
    </alternativeName>
    <alternativeName>
        <fullName evidence="1">NDH-1 subunit B 2</fullName>
    </alternativeName>
</protein>
<accession>B8GA16</accession>